<proteinExistence type="inferred from homology"/>
<organism>
    <name type="scientific">Methylorubrum populi (strain ATCC BAA-705 / NCIMB 13946 / BJ001)</name>
    <name type="common">Methylobacterium populi</name>
    <dbReference type="NCBI Taxonomy" id="441620"/>
    <lineage>
        <taxon>Bacteria</taxon>
        <taxon>Pseudomonadati</taxon>
        <taxon>Pseudomonadota</taxon>
        <taxon>Alphaproteobacteria</taxon>
        <taxon>Hyphomicrobiales</taxon>
        <taxon>Methylobacteriaceae</taxon>
        <taxon>Methylorubrum</taxon>
    </lineage>
</organism>
<name>HSLU_METPB</name>
<evidence type="ECO:0000255" key="1">
    <source>
        <dbReference type="HAMAP-Rule" id="MF_00249"/>
    </source>
</evidence>
<accession>B1ZL59</accession>
<comment type="function">
    <text evidence="1">ATPase subunit of a proteasome-like degradation complex; this subunit has chaperone activity. The binding of ATP and its subsequent hydrolysis by HslU are essential for unfolding of protein substrates subsequently hydrolyzed by HslV. HslU recognizes the N-terminal part of its protein substrates and unfolds these before they are guided to HslV for hydrolysis.</text>
</comment>
<comment type="subunit">
    <text evidence="1">A double ring-shaped homohexamer of HslV is capped on each side by a ring-shaped HslU homohexamer. The assembly of the HslU/HslV complex is dependent on binding of ATP.</text>
</comment>
<comment type="subcellular location">
    <subcellularLocation>
        <location evidence="1">Cytoplasm</location>
    </subcellularLocation>
</comment>
<comment type="similarity">
    <text evidence="1">Belongs to the ClpX chaperone family. HslU subfamily.</text>
</comment>
<reference key="1">
    <citation type="submission" date="2008-04" db="EMBL/GenBank/DDBJ databases">
        <title>Complete sequence of chromosome of Methylobacterium populi BJ001.</title>
        <authorList>
            <consortium name="US DOE Joint Genome Institute"/>
            <person name="Copeland A."/>
            <person name="Lucas S."/>
            <person name="Lapidus A."/>
            <person name="Glavina del Rio T."/>
            <person name="Dalin E."/>
            <person name="Tice H."/>
            <person name="Bruce D."/>
            <person name="Goodwin L."/>
            <person name="Pitluck S."/>
            <person name="Chertkov O."/>
            <person name="Brettin T."/>
            <person name="Detter J.C."/>
            <person name="Han C."/>
            <person name="Kuske C.R."/>
            <person name="Schmutz J."/>
            <person name="Larimer F."/>
            <person name="Land M."/>
            <person name="Hauser L."/>
            <person name="Kyrpides N."/>
            <person name="Mikhailova N."/>
            <person name="Marx C."/>
            <person name="Richardson P."/>
        </authorList>
    </citation>
    <scope>NUCLEOTIDE SEQUENCE [LARGE SCALE GENOMIC DNA]</scope>
    <source>
        <strain>ATCC BAA-705 / NCIMB 13946 / BJ001</strain>
    </source>
</reference>
<feature type="chain" id="PRO_1000100956" description="ATP-dependent protease ATPase subunit HslU">
    <location>
        <begin position="1"/>
        <end position="437"/>
    </location>
</feature>
<feature type="binding site" evidence="1">
    <location>
        <position position="18"/>
    </location>
    <ligand>
        <name>ATP</name>
        <dbReference type="ChEBI" id="CHEBI:30616"/>
    </ligand>
</feature>
<feature type="binding site" evidence="1">
    <location>
        <begin position="60"/>
        <end position="65"/>
    </location>
    <ligand>
        <name>ATP</name>
        <dbReference type="ChEBI" id="CHEBI:30616"/>
    </ligand>
</feature>
<feature type="binding site" evidence="1">
    <location>
        <position position="250"/>
    </location>
    <ligand>
        <name>ATP</name>
        <dbReference type="ChEBI" id="CHEBI:30616"/>
    </ligand>
</feature>
<feature type="binding site" evidence="1">
    <location>
        <position position="315"/>
    </location>
    <ligand>
        <name>ATP</name>
        <dbReference type="ChEBI" id="CHEBI:30616"/>
    </ligand>
</feature>
<feature type="binding site" evidence="1">
    <location>
        <position position="387"/>
    </location>
    <ligand>
        <name>ATP</name>
        <dbReference type="ChEBI" id="CHEBI:30616"/>
    </ligand>
</feature>
<dbReference type="EMBL" id="CP001029">
    <property type="protein sequence ID" value="ACB78802.1"/>
    <property type="molecule type" value="Genomic_DNA"/>
</dbReference>
<dbReference type="RefSeq" id="WP_012452558.1">
    <property type="nucleotide sequence ID" value="NC_010725.1"/>
</dbReference>
<dbReference type="SMR" id="B1ZL59"/>
<dbReference type="STRING" id="441620.Mpop_0624"/>
<dbReference type="KEGG" id="mpo:Mpop_0624"/>
<dbReference type="eggNOG" id="COG1220">
    <property type="taxonomic scope" value="Bacteria"/>
</dbReference>
<dbReference type="HOGENOM" id="CLU_033123_0_0_5"/>
<dbReference type="OrthoDB" id="9804062at2"/>
<dbReference type="Proteomes" id="UP000007136">
    <property type="component" value="Chromosome"/>
</dbReference>
<dbReference type="GO" id="GO:0009376">
    <property type="term" value="C:HslUV protease complex"/>
    <property type="evidence" value="ECO:0007669"/>
    <property type="project" value="UniProtKB-UniRule"/>
</dbReference>
<dbReference type="GO" id="GO:0005524">
    <property type="term" value="F:ATP binding"/>
    <property type="evidence" value="ECO:0007669"/>
    <property type="project" value="UniProtKB-UniRule"/>
</dbReference>
<dbReference type="GO" id="GO:0016887">
    <property type="term" value="F:ATP hydrolysis activity"/>
    <property type="evidence" value="ECO:0007669"/>
    <property type="project" value="InterPro"/>
</dbReference>
<dbReference type="GO" id="GO:0008233">
    <property type="term" value="F:peptidase activity"/>
    <property type="evidence" value="ECO:0007669"/>
    <property type="project" value="InterPro"/>
</dbReference>
<dbReference type="GO" id="GO:0036402">
    <property type="term" value="F:proteasome-activating activity"/>
    <property type="evidence" value="ECO:0007669"/>
    <property type="project" value="UniProtKB-UniRule"/>
</dbReference>
<dbReference type="GO" id="GO:0043335">
    <property type="term" value="P:protein unfolding"/>
    <property type="evidence" value="ECO:0007669"/>
    <property type="project" value="UniProtKB-UniRule"/>
</dbReference>
<dbReference type="GO" id="GO:0051603">
    <property type="term" value="P:proteolysis involved in protein catabolic process"/>
    <property type="evidence" value="ECO:0007669"/>
    <property type="project" value="TreeGrafter"/>
</dbReference>
<dbReference type="CDD" id="cd19498">
    <property type="entry name" value="RecA-like_HslU"/>
    <property type="match status" value="1"/>
</dbReference>
<dbReference type="FunFam" id="3.40.50.300:FF:000213">
    <property type="entry name" value="ATP-dependent protease ATPase subunit HslU"/>
    <property type="match status" value="1"/>
</dbReference>
<dbReference type="FunFam" id="3.40.50.300:FF:000220">
    <property type="entry name" value="ATP-dependent protease ATPase subunit HslU"/>
    <property type="match status" value="1"/>
</dbReference>
<dbReference type="Gene3D" id="1.10.8.60">
    <property type="match status" value="1"/>
</dbReference>
<dbReference type="Gene3D" id="3.40.50.300">
    <property type="entry name" value="P-loop containing nucleotide triphosphate hydrolases"/>
    <property type="match status" value="2"/>
</dbReference>
<dbReference type="HAMAP" id="MF_00249">
    <property type="entry name" value="HslU"/>
    <property type="match status" value="1"/>
</dbReference>
<dbReference type="InterPro" id="IPR003593">
    <property type="entry name" value="AAA+_ATPase"/>
</dbReference>
<dbReference type="InterPro" id="IPR050052">
    <property type="entry name" value="ATP-dep_Clp_protease_ClpX"/>
</dbReference>
<dbReference type="InterPro" id="IPR003959">
    <property type="entry name" value="ATPase_AAA_core"/>
</dbReference>
<dbReference type="InterPro" id="IPR019489">
    <property type="entry name" value="Clp_ATPase_C"/>
</dbReference>
<dbReference type="InterPro" id="IPR004491">
    <property type="entry name" value="HslU"/>
</dbReference>
<dbReference type="InterPro" id="IPR027417">
    <property type="entry name" value="P-loop_NTPase"/>
</dbReference>
<dbReference type="NCBIfam" id="TIGR00390">
    <property type="entry name" value="hslU"/>
    <property type="match status" value="1"/>
</dbReference>
<dbReference type="NCBIfam" id="NF003544">
    <property type="entry name" value="PRK05201.1"/>
    <property type="match status" value="1"/>
</dbReference>
<dbReference type="PANTHER" id="PTHR48102">
    <property type="entry name" value="ATP-DEPENDENT CLP PROTEASE ATP-BINDING SUBUNIT CLPX-LIKE, MITOCHONDRIAL-RELATED"/>
    <property type="match status" value="1"/>
</dbReference>
<dbReference type="PANTHER" id="PTHR48102:SF3">
    <property type="entry name" value="ATP-DEPENDENT PROTEASE ATPASE SUBUNIT HSLU"/>
    <property type="match status" value="1"/>
</dbReference>
<dbReference type="Pfam" id="PF00004">
    <property type="entry name" value="AAA"/>
    <property type="match status" value="1"/>
</dbReference>
<dbReference type="Pfam" id="PF07724">
    <property type="entry name" value="AAA_2"/>
    <property type="match status" value="1"/>
</dbReference>
<dbReference type="SMART" id="SM00382">
    <property type="entry name" value="AAA"/>
    <property type="match status" value="1"/>
</dbReference>
<dbReference type="SMART" id="SM01086">
    <property type="entry name" value="ClpB_D2-small"/>
    <property type="match status" value="1"/>
</dbReference>
<dbReference type="SUPFAM" id="SSF52540">
    <property type="entry name" value="P-loop containing nucleoside triphosphate hydrolases"/>
    <property type="match status" value="1"/>
</dbReference>
<sequence>MTTFSPREIVSELDRFIVGQKDAKRAVAIALRNRWRRQQLKGPLRDEVAPKNILMIGPTGCGKTEIARRLARLAGAPFLKVEATKFTEVGYVGRDVEQIVRDLVEVGIGLTREEKRKAVKAKAEAAAESRILDALVGPTASQATRESFRKKLRNSELDDKEVEIELAPSGPQGMPMFEIPGMPGASMGAINISDMLGKALGGQRGKPRRITVADAYAPLIAEESDKLVDDDALTREAIREVEDNGIVFLDEIDKICAREGRSGADVSREGVQRDLLPLIEGTTVATKHGPVKTDHILFIASGAFHVSKPSDLLPELQGRLPIRVELQPLTVEDFKQILTATEASLIKQTVALMETEGVTLDFTEDAIDALARVAVEVNGSVENIGARRLQTVLERVIDEISFTATDRSGETVPIDAGYVRERVADLAANTDLSRFIL</sequence>
<keyword id="KW-0067">ATP-binding</keyword>
<keyword id="KW-0143">Chaperone</keyword>
<keyword id="KW-0963">Cytoplasm</keyword>
<keyword id="KW-0547">Nucleotide-binding</keyword>
<keyword id="KW-0346">Stress response</keyword>
<gene>
    <name evidence="1" type="primary">hslU</name>
    <name type="ordered locus">Mpop_0624</name>
</gene>
<protein>
    <recommendedName>
        <fullName evidence="1">ATP-dependent protease ATPase subunit HslU</fullName>
    </recommendedName>
    <alternativeName>
        <fullName evidence="1">Unfoldase HslU</fullName>
    </alternativeName>
</protein>